<keyword id="KW-0002">3D-structure</keyword>
<keyword id="KW-1003">Cell membrane</keyword>
<keyword id="KW-1015">Disulfide bond</keyword>
<keyword id="KW-0297">G-protein coupled receptor</keyword>
<keyword id="KW-0325">Glycoprotein</keyword>
<keyword id="KW-0472">Membrane</keyword>
<keyword id="KW-0675">Receptor</keyword>
<keyword id="KW-1185">Reference proteome</keyword>
<keyword id="KW-0807">Transducer</keyword>
<keyword id="KW-0812">Transmembrane</keyword>
<keyword id="KW-1133">Transmembrane helix</keyword>
<evidence type="ECO:0000255" key="1"/>
<evidence type="ECO:0000255" key="2">
    <source>
        <dbReference type="PROSITE-ProRule" id="PRU00521"/>
    </source>
</evidence>
<evidence type="ECO:0000256" key="3">
    <source>
        <dbReference type="SAM" id="MobiDB-lite"/>
    </source>
</evidence>
<evidence type="ECO:0000269" key="4">
    <source>
    </source>
</evidence>
<evidence type="ECO:0000269" key="5">
    <source>
    </source>
</evidence>
<evidence type="ECO:0000269" key="6">
    <source>
    </source>
</evidence>
<evidence type="ECO:0000269" key="7">
    <source>
    </source>
</evidence>
<evidence type="ECO:0000305" key="8"/>
<evidence type="ECO:0000305" key="9">
    <source>
    </source>
</evidence>
<evidence type="ECO:0000305" key="10">
    <source>
    </source>
</evidence>
<evidence type="ECO:0000312" key="11">
    <source>
        <dbReference type="HGNC" id="HGNC:4848"/>
    </source>
</evidence>
<evidence type="ECO:0007744" key="12">
    <source>
        <dbReference type="PDB" id="4ZJ8"/>
    </source>
</evidence>
<evidence type="ECO:0007744" key="13">
    <source>
        <dbReference type="PDB" id="4ZJC"/>
    </source>
</evidence>
<evidence type="ECO:0007829" key="14">
    <source>
        <dbReference type="PDB" id="4ZJ8"/>
    </source>
</evidence>
<evidence type="ECO:0007829" key="15">
    <source>
        <dbReference type="PDB" id="6TOD"/>
    </source>
</evidence>
<evidence type="ECO:0007829" key="16">
    <source>
        <dbReference type="PDB" id="6TP6"/>
    </source>
</evidence>
<organism>
    <name type="scientific">Homo sapiens</name>
    <name type="common">Human</name>
    <dbReference type="NCBI Taxonomy" id="9606"/>
    <lineage>
        <taxon>Eukaryota</taxon>
        <taxon>Metazoa</taxon>
        <taxon>Chordata</taxon>
        <taxon>Craniata</taxon>
        <taxon>Vertebrata</taxon>
        <taxon>Euteleostomi</taxon>
        <taxon>Mammalia</taxon>
        <taxon>Eutheria</taxon>
        <taxon>Euarchontoglires</taxon>
        <taxon>Primates</taxon>
        <taxon>Haplorrhini</taxon>
        <taxon>Catarrhini</taxon>
        <taxon>Hominidae</taxon>
        <taxon>Homo</taxon>
    </lineage>
</organism>
<dbReference type="EMBL" id="AF041243">
    <property type="protein sequence ID" value="AAC39601.1"/>
    <property type="molecule type" value="mRNA"/>
</dbReference>
<dbReference type="EMBL" id="AF202084">
    <property type="protein sequence ID" value="AAG28020.1"/>
    <property type="molecule type" value="Genomic_DNA"/>
</dbReference>
<dbReference type="EMBL" id="AF202078">
    <property type="protein sequence ID" value="AAG28020.1"/>
    <property type="status" value="JOINED"/>
    <property type="molecule type" value="Genomic_DNA"/>
</dbReference>
<dbReference type="EMBL" id="AF202079">
    <property type="protein sequence ID" value="AAG28020.1"/>
    <property type="status" value="JOINED"/>
    <property type="molecule type" value="Genomic_DNA"/>
</dbReference>
<dbReference type="EMBL" id="AF202080">
    <property type="protein sequence ID" value="AAG28020.1"/>
    <property type="status" value="JOINED"/>
    <property type="molecule type" value="Genomic_DNA"/>
</dbReference>
<dbReference type="EMBL" id="AF202081">
    <property type="protein sequence ID" value="AAG28020.1"/>
    <property type="status" value="JOINED"/>
    <property type="molecule type" value="Genomic_DNA"/>
</dbReference>
<dbReference type="EMBL" id="AF202082">
    <property type="protein sequence ID" value="AAG28020.1"/>
    <property type="status" value="JOINED"/>
    <property type="molecule type" value="Genomic_DNA"/>
</dbReference>
<dbReference type="EMBL" id="AF202083">
    <property type="protein sequence ID" value="AAG28020.1"/>
    <property type="status" value="JOINED"/>
    <property type="molecule type" value="Genomic_DNA"/>
</dbReference>
<dbReference type="EMBL" id="AY062030">
    <property type="protein sequence ID" value="AAL47214.1"/>
    <property type="molecule type" value="Genomic_DNA"/>
</dbReference>
<dbReference type="EMBL" id="AY070269">
    <property type="protein sequence ID" value="AAL50221.1"/>
    <property type="molecule type" value="Genomic_DNA"/>
</dbReference>
<dbReference type="EMBL" id="AK290521">
    <property type="protein sequence ID" value="BAF83210.1"/>
    <property type="molecule type" value="mRNA"/>
</dbReference>
<dbReference type="EMBL" id="AC114488">
    <property type="status" value="NOT_ANNOTATED_CDS"/>
    <property type="molecule type" value="Genomic_DNA"/>
</dbReference>
<dbReference type="EMBL" id="CH471059">
    <property type="protein sequence ID" value="EAX07602.1"/>
    <property type="molecule type" value="Genomic_DNA"/>
</dbReference>
<dbReference type="EMBL" id="BC074796">
    <property type="protein sequence ID" value="AAH74796.1"/>
    <property type="molecule type" value="mRNA"/>
</dbReference>
<dbReference type="CCDS" id="CCDS344.1"/>
<dbReference type="RefSeq" id="NP_001516.2">
    <property type="nucleotide sequence ID" value="NM_001525.3"/>
</dbReference>
<dbReference type="RefSeq" id="XP_016856594.1">
    <property type="nucleotide sequence ID" value="XM_017001105.1"/>
</dbReference>
<dbReference type="RefSeq" id="XP_016856595.1">
    <property type="nucleotide sequence ID" value="XM_017001106.1"/>
</dbReference>
<dbReference type="RefSeq" id="XP_024302373.1">
    <property type="nucleotide sequence ID" value="XM_024446605.2"/>
</dbReference>
<dbReference type="PDB" id="4ZJ8">
    <property type="method" value="X-ray"/>
    <property type="resolution" value="2.75 A"/>
    <property type="chains" value="A=1-246, A=288-380"/>
</dbReference>
<dbReference type="PDB" id="4ZJC">
    <property type="method" value="X-ray"/>
    <property type="resolution" value="2.83 A"/>
    <property type="chains" value="A=1-246, A=288-380"/>
</dbReference>
<dbReference type="PDB" id="6TO7">
    <property type="method" value="X-ray"/>
    <property type="resolution" value="2.26 A"/>
    <property type="chains" value="A/B=28-380"/>
</dbReference>
<dbReference type="PDB" id="6TOD">
    <property type="method" value="X-ray"/>
    <property type="resolution" value="2.11 A"/>
    <property type="chains" value="A/B=28-380"/>
</dbReference>
<dbReference type="PDB" id="6TOS">
    <property type="method" value="X-ray"/>
    <property type="resolution" value="2.13 A"/>
    <property type="chains" value="A/B=28-380"/>
</dbReference>
<dbReference type="PDB" id="6TOT">
    <property type="method" value="X-ray"/>
    <property type="resolution" value="2.22 A"/>
    <property type="chains" value="A/B=28-380"/>
</dbReference>
<dbReference type="PDB" id="6TP3">
    <property type="method" value="X-ray"/>
    <property type="resolution" value="3.04 A"/>
    <property type="chains" value="A/B=28-380"/>
</dbReference>
<dbReference type="PDB" id="6TP4">
    <property type="method" value="X-ray"/>
    <property type="resolution" value="3.01 A"/>
    <property type="chains" value="A/B=28-380"/>
</dbReference>
<dbReference type="PDB" id="6TP6">
    <property type="method" value="X-ray"/>
    <property type="resolution" value="2.34 A"/>
    <property type="chains" value="A/B=28-380"/>
</dbReference>
<dbReference type="PDB" id="6TQ4">
    <property type="method" value="X-ray"/>
    <property type="resolution" value="2.30 A"/>
    <property type="chains" value="A/B=28-380"/>
</dbReference>
<dbReference type="PDB" id="6TQ6">
    <property type="method" value="X-ray"/>
    <property type="resolution" value="2.55 A"/>
    <property type="chains" value="A/B=28-380"/>
</dbReference>
<dbReference type="PDB" id="6TQ7">
    <property type="method" value="X-ray"/>
    <property type="resolution" value="2.66 A"/>
    <property type="chains" value="A/B=28-380"/>
</dbReference>
<dbReference type="PDB" id="6TQ9">
    <property type="method" value="X-ray"/>
    <property type="resolution" value="2.65 A"/>
    <property type="chains" value="A/B=28-381"/>
</dbReference>
<dbReference type="PDB" id="6V9S">
    <property type="method" value="X-ray"/>
    <property type="resolution" value="3.50 A"/>
    <property type="chains" value="A=1-246, A=288-380"/>
</dbReference>
<dbReference type="PDBsum" id="4ZJ8"/>
<dbReference type="PDBsum" id="4ZJC"/>
<dbReference type="PDBsum" id="6TO7"/>
<dbReference type="PDBsum" id="6TOD"/>
<dbReference type="PDBsum" id="6TOS"/>
<dbReference type="PDBsum" id="6TOT"/>
<dbReference type="PDBsum" id="6TP3"/>
<dbReference type="PDBsum" id="6TP4"/>
<dbReference type="PDBsum" id="6TP6"/>
<dbReference type="PDBsum" id="6TQ4"/>
<dbReference type="PDBsum" id="6TQ6"/>
<dbReference type="PDBsum" id="6TQ7"/>
<dbReference type="PDBsum" id="6TQ9"/>
<dbReference type="PDBsum" id="6V9S"/>
<dbReference type="SMR" id="O43613"/>
<dbReference type="BioGRID" id="109311">
    <property type="interactions" value="7"/>
</dbReference>
<dbReference type="CORUM" id="O43613"/>
<dbReference type="ELM" id="O43613"/>
<dbReference type="FunCoup" id="O43613">
    <property type="interactions" value="720"/>
</dbReference>
<dbReference type="IntAct" id="O43613">
    <property type="interactions" value="4"/>
</dbReference>
<dbReference type="MINT" id="O43613"/>
<dbReference type="STRING" id="9606.ENSP00000384387"/>
<dbReference type="BindingDB" id="O43613"/>
<dbReference type="ChEMBL" id="CHEMBL5113"/>
<dbReference type="DrugBank" id="DB06673">
    <property type="generic name" value="Almorexant"/>
</dbReference>
<dbReference type="DrugBank" id="DB15031">
    <property type="generic name" value="Daridorexant"/>
</dbReference>
<dbReference type="DrugBank" id="DB11951">
    <property type="generic name" value="Lemborexant"/>
</dbReference>
<dbReference type="DrugBank" id="DB14822">
    <property type="generic name" value="SB-649868"/>
</dbReference>
<dbReference type="DrugBank" id="DB09034">
    <property type="generic name" value="Suvorexant"/>
</dbReference>
<dbReference type="DrugCentral" id="O43613"/>
<dbReference type="GuidetoPHARMACOLOGY" id="321"/>
<dbReference type="GlyCosmos" id="O43613">
    <property type="glycosylation" value="3 sites, 1 glycan"/>
</dbReference>
<dbReference type="GlyGen" id="O43613">
    <property type="glycosylation" value="4 sites, 1 O-linked glycan (2 sites)"/>
</dbReference>
<dbReference type="iPTMnet" id="O43613"/>
<dbReference type="PhosphoSitePlus" id="O43613"/>
<dbReference type="BioMuta" id="HCRTR1"/>
<dbReference type="MassIVE" id="O43613"/>
<dbReference type="PaxDb" id="9606-ENSP00000384387"/>
<dbReference type="PeptideAtlas" id="O43613"/>
<dbReference type="ProteomicsDB" id="49081"/>
<dbReference type="Antibodypedia" id="2934">
    <property type="antibodies" value="405 antibodies from 38 providers"/>
</dbReference>
<dbReference type="DNASU" id="3061"/>
<dbReference type="Ensembl" id="ENST00000373706.9">
    <property type="protein sequence ID" value="ENSP00000362810.5"/>
    <property type="gene ID" value="ENSG00000121764.12"/>
</dbReference>
<dbReference type="Ensembl" id="ENST00000403528.7">
    <property type="protein sequence ID" value="ENSP00000384387.2"/>
    <property type="gene ID" value="ENSG00000121764.12"/>
</dbReference>
<dbReference type="GeneID" id="3061"/>
<dbReference type="KEGG" id="hsa:3061"/>
<dbReference type="MANE-Select" id="ENST00000403528.7">
    <property type="protein sequence ID" value="ENSP00000384387.2"/>
    <property type="RefSeq nucleotide sequence ID" value="NM_001525.3"/>
    <property type="RefSeq protein sequence ID" value="NP_001516.2"/>
</dbReference>
<dbReference type="UCSC" id="uc001btd.3">
    <property type="organism name" value="human"/>
</dbReference>
<dbReference type="AGR" id="HGNC:4848"/>
<dbReference type="CTD" id="3061"/>
<dbReference type="DisGeNET" id="3061"/>
<dbReference type="GeneCards" id="HCRTR1"/>
<dbReference type="HGNC" id="HGNC:4848">
    <property type="gene designation" value="HCRTR1"/>
</dbReference>
<dbReference type="HPA" id="ENSG00000121764">
    <property type="expression patterns" value="Tissue enhanced (adrenal)"/>
</dbReference>
<dbReference type="MIM" id="602392">
    <property type="type" value="gene"/>
</dbReference>
<dbReference type="neXtProt" id="NX_O43613"/>
<dbReference type="OpenTargets" id="ENSG00000121764"/>
<dbReference type="PharmGKB" id="PA29222"/>
<dbReference type="VEuPathDB" id="HostDB:ENSG00000121764"/>
<dbReference type="eggNOG" id="KOG3656">
    <property type="taxonomic scope" value="Eukaryota"/>
</dbReference>
<dbReference type="GeneTree" id="ENSGT01130000278294"/>
<dbReference type="HOGENOM" id="CLU_009579_6_3_1"/>
<dbReference type="InParanoid" id="O43613"/>
<dbReference type="OMA" id="HTLCKVI"/>
<dbReference type="OrthoDB" id="9986530at2759"/>
<dbReference type="PAN-GO" id="O43613">
    <property type="GO annotations" value="3 GO annotations based on evolutionary models"/>
</dbReference>
<dbReference type="PhylomeDB" id="O43613"/>
<dbReference type="TreeFam" id="TF315303"/>
<dbReference type="PathwayCommons" id="O43613"/>
<dbReference type="Reactome" id="R-HSA-389397">
    <property type="pathway name" value="Orexin and neuropeptides FF and QRFP bind to their respective receptors"/>
</dbReference>
<dbReference type="Reactome" id="R-HSA-416476">
    <property type="pathway name" value="G alpha (q) signalling events"/>
</dbReference>
<dbReference type="SignaLink" id="O43613"/>
<dbReference type="SIGNOR" id="O43613"/>
<dbReference type="BioGRID-ORCS" id="3061">
    <property type="hits" value="153 hits in 1144 CRISPR screens"/>
</dbReference>
<dbReference type="ChiTaRS" id="HCRTR1">
    <property type="organism name" value="human"/>
</dbReference>
<dbReference type="GeneWiki" id="Hypocretin_(orexin)_receptor_1"/>
<dbReference type="GenomeRNAi" id="3061"/>
<dbReference type="Pharos" id="O43613">
    <property type="development level" value="Tclin"/>
</dbReference>
<dbReference type="PRO" id="PR:O43613"/>
<dbReference type="Proteomes" id="UP000005640">
    <property type="component" value="Chromosome 1"/>
</dbReference>
<dbReference type="RNAct" id="O43613">
    <property type="molecule type" value="protein"/>
</dbReference>
<dbReference type="Bgee" id="ENSG00000121764">
    <property type="expression patterns" value="Expressed in apex of heart and 99 other cell types or tissues"/>
</dbReference>
<dbReference type="ExpressionAtlas" id="O43613">
    <property type="expression patterns" value="baseline and differential"/>
</dbReference>
<dbReference type="GO" id="GO:0005886">
    <property type="term" value="C:plasma membrane"/>
    <property type="evidence" value="ECO:0000314"/>
    <property type="project" value="UniProtKB"/>
</dbReference>
<dbReference type="GO" id="GO:0045202">
    <property type="term" value="C:synapse"/>
    <property type="evidence" value="ECO:0007669"/>
    <property type="project" value="GOC"/>
</dbReference>
<dbReference type="GO" id="GO:0004930">
    <property type="term" value="F:G protein-coupled receptor activity"/>
    <property type="evidence" value="ECO:0000318"/>
    <property type="project" value="GO_Central"/>
</dbReference>
<dbReference type="GO" id="GO:0016499">
    <property type="term" value="F:orexin receptor activity"/>
    <property type="evidence" value="ECO:0000314"/>
    <property type="project" value="UniProtKB"/>
</dbReference>
<dbReference type="GO" id="GO:0017046">
    <property type="term" value="F:peptide hormone binding"/>
    <property type="evidence" value="ECO:0007669"/>
    <property type="project" value="Ensembl"/>
</dbReference>
<dbReference type="GO" id="GO:0032870">
    <property type="term" value="P:cellular response to hormone stimulus"/>
    <property type="evidence" value="ECO:0000318"/>
    <property type="project" value="GO_Central"/>
</dbReference>
<dbReference type="GO" id="GO:0007268">
    <property type="term" value="P:chemical synaptic transmission"/>
    <property type="evidence" value="ECO:0000304"/>
    <property type="project" value="ProtInc"/>
</dbReference>
<dbReference type="GO" id="GO:0007631">
    <property type="term" value="P:feeding behavior"/>
    <property type="evidence" value="ECO:0000304"/>
    <property type="project" value="ProtInc"/>
</dbReference>
<dbReference type="GO" id="GO:0007218">
    <property type="term" value="P:neuropeptide signaling pathway"/>
    <property type="evidence" value="ECO:0000314"/>
    <property type="project" value="UniProtKB"/>
</dbReference>
<dbReference type="GO" id="GO:0070374">
    <property type="term" value="P:positive regulation of ERK1 and ERK2 cascade"/>
    <property type="evidence" value="ECO:0007669"/>
    <property type="project" value="Ensembl"/>
</dbReference>
<dbReference type="GO" id="GO:0051480">
    <property type="term" value="P:regulation of cytosolic calcium ion concentration"/>
    <property type="evidence" value="ECO:0000314"/>
    <property type="project" value="UniProtKB"/>
</dbReference>
<dbReference type="CDD" id="cd15208">
    <property type="entry name" value="7tmA_OXR"/>
    <property type="match status" value="1"/>
</dbReference>
<dbReference type="FunFam" id="1.20.1070.10:FF:000075">
    <property type="entry name" value="orexin receptor type 2"/>
    <property type="match status" value="1"/>
</dbReference>
<dbReference type="Gene3D" id="1.20.1070.10">
    <property type="entry name" value="Rhodopsin 7-helix transmembrane proteins"/>
    <property type="match status" value="1"/>
</dbReference>
<dbReference type="InterPro" id="IPR000276">
    <property type="entry name" value="GPCR_Rhodpsn"/>
</dbReference>
<dbReference type="InterPro" id="IPR017452">
    <property type="entry name" value="GPCR_Rhodpsn_7TM"/>
</dbReference>
<dbReference type="InterPro" id="IPR000204">
    <property type="entry name" value="Orexin_rcpt"/>
</dbReference>
<dbReference type="InterPro" id="IPR004059">
    <property type="entry name" value="OX1R"/>
</dbReference>
<dbReference type="PANTHER" id="PTHR45695:SF32">
    <property type="entry name" value="G PROTEIN-COUPLED RECEPTOR 15-LIKE"/>
    <property type="match status" value="1"/>
</dbReference>
<dbReference type="PANTHER" id="PTHR45695">
    <property type="entry name" value="LEUCOKININ RECEPTOR-RELATED"/>
    <property type="match status" value="1"/>
</dbReference>
<dbReference type="Pfam" id="PF00001">
    <property type="entry name" value="7tm_1"/>
    <property type="match status" value="1"/>
</dbReference>
<dbReference type="PRINTS" id="PR00237">
    <property type="entry name" value="GPCRRHODOPSN"/>
</dbReference>
<dbReference type="PRINTS" id="PR01521">
    <property type="entry name" value="OREXIN1R"/>
</dbReference>
<dbReference type="PRINTS" id="PR01064">
    <property type="entry name" value="OREXINR"/>
</dbReference>
<dbReference type="SMART" id="SM01381">
    <property type="entry name" value="7TM_GPCR_Srsx"/>
    <property type="match status" value="1"/>
</dbReference>
<dbReference type="SUPFAM" id="SSF81321">
    <property type="entry name" value="Family A G protein-coupled receptor-like"/>
    <property type="match status" value="1"/>
</dbReference>
<dbReference type="PROSITE" id="PS00237">
    <property type="entry name" value="G_PROTEIN_RECEP_F1_1"/>
    <property type="match status" value="1"/>
</dbReference>
<dbReference type="PROSITE" id="PS50262">
    <property type="entry name" value="G_PROTEIN_RECEP_F1_2"/>
    <property type="match status" value="1"/>
</dbReference>
<reference key="1">
    <citation type="journal article" date="1998" name="Cell">
        <title>Orexins and orexin receptors: a family of hypothalamic neuropeptides and G protein-coupled receptors that regulate feeding behavior.</title>
        <authorList>
            <person name="Sakurai T."/>
            <person name="Amemiya A."/>
            <person name="Ishii M."/>
            <person name="Matsuzaki I."/>
            <person name="Chemelli R.M."/>
            <person name="Tanaka H."/>
            <person name="Williams S.C."/>
            <person name="Richardson J.A."/>
            <person name="Kozlowski G.P."/>
            <person name="Wilson S."/>
            <person name="Arch J.R.S."/>
            <person name="Buckingham R.E."/>
            <person name="Haynes A.C."/>
            <person name="Carr S.A."/>
            <person name="Annan R.S."/>
            <person name="McNulty D.E."/>
            <person name="Liu W.-S."/>
            <person name="Terrett J.A."/>
            <person name="Elshourbagy N.A."/>
            <person name="Bergsma D.J."/>
            <person name="Yanagisawa M."/>
        </authorList>
    </citation>
    <scope>NUCLEOTIDE SEQUENCE [MRNA]</scope>
    <scope>FUNCTION</scope>
    <scope>SUBCELLULAR LOCATION</scope>
</reference>
<reference key="2">
    <citation type="journal article" date="2000" name="Nat. Med.">
        <title>A mutation in a case of early onset narcolepsy and a generalized absence of hypocretin peptides in human narcoleptic brains.</title>
        <authorList>
            <person name="Peyron C."/>
            <person name="Faraco J."/>
            <person name="Rogers W."/>
            <person name="Ripley B."/>
            <person name="Overeem S."/>
            <person name="Charnay Y."/>
            <person name="Nevsimalova S."/>
            <person name="Aldrich M."/>
            <person name="Reynolds D."/>
            <person name="Albin R."/>
            <person name="Li R."/>
            <person name="Hungs M."/>
            <person name="Pedrazzoli M."/>
            <person name="Padigaru M."/>
            <person name="Kucherlapati M."/>
            <person name="Fan J."/>
            <person name="Maki R."/>
            <person name="Lammers G.J."/>
            <person name="Bouras C."/>
            <person name="Kucherlapati R."/>
            <person name="Nishino S."/>
            <person name="Mignot E."/>
        </authorList>
    </citation>
    <scope>NUCLEOTIDE SEQUENCE [GENOMIC DNA]</scope>
</reference>
<reference key="3">
    <citation type="journal article" date="2001" name="Neurology">
        <title>Polymorphisms in hypocretin/orexin pathway genes and narcolepsy.</title>
        <authorList>
            <person name="Olafsdottir B.R."/>
            <person name="Rye D.B."/>
            <person name="Scammell T.E."/>
            <person name="Matheson J.K."/>
            <person name="Stefansson K."/>
            <person name="Gulcher J.R."/>
        </authorList>
    </citation>
    <scope>NUCLEOTIDE SEQUENCE [GENOMIC DNA]</scope>
    <scope>VARIANTS SER-167; GLN-279; HIS-281 AND VAL-408</scope>
</reference>
<reference key="4">
    <citation type="submission" date="2001-12" db="EMBL/GenBank/DDBJ databases">
        <title>Genomic sequence of the hypocretin (orexin) receptor 1 (HCRTR1).</title>
        <authorList>
            <person name="Yeager M."/>
            <person name="Welch R."/>
            <person name="Haque K."/>
            <person name="Bergen A."/>
        </authorList>
    </citation>
    <scope>NUCLEOTIDE SEQUENCE [GENOMIC DNA]</scope>
</reference>
<reference key="5">
    <citation type="journal article" date="2004" name="Nat. Genet.">
        <title>Complete sequencing and characterization of 21,243 full-length human cDNAs.</title>
        <authorList>
            <person name="Ota T."/>
            <person name="Suzuki Y."/>
            <person name="Nishikawa T."/>
            <person name="Otsuki T."/>
            <person name="Sugiyama T."/>
            <person name="Irie R."/>
            <person name="Wakamatsu A."/>
            <person name="Hayashi K."/>
            <person name="Sato H."/>
            <person name="Nagai K."/>
            <person name="Kimura K."/>
            <person name="Makita H."/>
            <person name="Sekine M."/>
            <person name="Obayashi M."/>
            <person name="Nishi T."/>
            <person name="Shibahara T."/>
            <person name="Tanaka T."/>
            <person name="Ishii S."/>
            <person name="Yamamoto J."/>
            <person name="Saito K."/>
            <person name="Kawai Y."/>
            <person name="Isono Y."/>
            <person name="Nakamura Y."/>
            <person name="Nagahari K."/>
            <person name="Murakami K."/>
            <person name="Yasuda T."/>
            <person name="Iwayanagi T."/>
            <person name="Wagatsuma M."/>
            <person name="Shiratori A."/>
            <person name="Sudo H."/>
            <person name="Hosoiri T."/>
            <person name="Kaku Y."/>
            <person name="Kodaira H."/>
            <person name="Kondo H."/>
            <person name="Sugawara M."/>
            <person name="Takahashi M."/>
            <person name="Kanda K."/>
            <person name="Yokoi T."/>
            <person name="Furuya T."/>
            <person name="Kikkawa E."/>
            <person name="Omura Y."/>
            <person name="Abe K."/>
            <person name="Kamihara K."/>
            <person name="Katsuta N."/>
            <person name="Sato K."/>
            <person name="Tanikawa M."/>
            <person name="Yamazaki M."/>
            <person name="Ninomiya K."/>
            <person name="Ishibashi T."/>
            <person name="Yamashita H."/>
            <person name="Murakawa K."/>
            <person name="Fujimori K."/>
            <person name="Tanai H."/>
            <person name="Kimata M."/>
            <person name="Watanabe M."/>
            <person name="Hiraoka S."/>
            <person name="Chiba Y."/>
            <person name="Ishida S."/>
            <person name="Ono Y."/>
            <person name="Takiguchi S."/>
            <person name="Watanabe S."/>
            <person name="Yosida M."/>
            <person name="Hotuta T."/>
            <person name="Kusano J."/>
            <person name="Kanehori K."/>
            <person name="Takahashi-Fujii A."/>
            <person name="Hara H."/>
            <person name="Tanase T.-O."/>
            <person name="Nomura Y."/>
            <person name="Togiya S."/>
            <person name="Komai F."/>
            <person name="Hara R."/>
            <person name="Takeuchi K."/>
            <person name="Arita M."/>
            <person name="Imose N."/>
            <person name="Musashino K."/>
            <person name="Yuuki H."/>
            <person name="Oshima A."/>
            <person name="Sasaki N."/>
            <person name="Aotsuka S."/>
            <person name="Yoshikawa Y."/>
            <person name="Matsunawa H."/>
            <person name="Ichihara T."/>
            <person name="Shiohata N."/>
            <person name="Sano S."/>
            <person name="Moriya S."/>
            <person name="Momiyama H."/>
            <person name="Satoh N."/>
            <person name="Takami S."/>
            <person name="Terashima Y."/>
            <person name="Suzuki O."/>
            <person name="Nakagawa S."/>
            <person name="Senoh A."/>
            <person name="Mizoguchi H."/>
            <person name="Goto Y."/>
            <person name="Shimizu F."/>
            <person name="Wakebe H."/>
            <person name="Hishigaki H."/>
            <person name="Watanabe T."/>
            <person name="Sugiyama A."/>
            <person name="Takemoto M."/>
            <person name="Kawakami B."/>
            <person name="Yamazaki M."/>
            <person name="Watanabe K."/>
            <person name="Kumagai A."/>
            <person name="Itakura S."/>
            <person name="Fukuzumi Y."/>
            <person name="Fujimori Y."/>
            <person name="Komiyama M."/>
            <person name="Tashiro H."/>
            <person name="Tanigami A."/>
            <person name="Fujiwara T."/>
            <person name="Ono T."/>
            <person name="Yamada K."/>
            <person name="Fujii Y."/>
            <person name="Ozaki K."/>
            <person name="Hirao M."/>
            <person name="Ohmori Y."/>
            <person name="Kawabata A."/>
            <person name="Hikiji T."/>
            <person name="Kobatake N."/>
            <person name="Inagaki H."/>
            <person name="Ikema Y."/>
            <person name="Okamoto S."/>
            <person name="Okitani R."/>
            <person name="Kawakami T."/>
            <person name="Noguchi S."/>
            <person name="Itoh T."/>
            <person name="Shigeta K."/>
            <person name="Senba T."/>
            <person name="Matsumura K."/>
            <person name="Nakajima Y."/>
            <person name="Mizuno T."/>
            <person name="Morinaga M."/>
            <person name="Sasaki M."/>
            <person name="Togashi T."/>
            <person name="Oyama M."/>
            <person name="Hata H."/>
            <person name="Watanabe M."/>
            <person name="Komatsu T."/>
            <person name="Mizushima-Sugano J."/>
            <person name="Satoh T."/>
            <person name="Shirai Y."/>
            <person name="Takahashi Y."/>
            <person name="Nakagawa K."/>
            <person name="Okumura K."/>
            <person name="Nagase T."/>
            <person name="Nomura N."/>
            <person name="Kikuchi H."/>
            <person name="Masuho Y."/>
            <person name="Yamashita R."/>
            <person name="Nakai K."/>
            <person name="Yada T."/>
            <person name="Nakamura Y."/>
            <person name="Ohara O."/>
            <person name="Isogai T."/>
            <person name="Sugano S."/>
        </authorList>
    </citation>
    <scope>NUCLEOTIDE SEQUENCE [LARGE SCALE MRNA]</scope>
    <scope>VARIANT VAL-408</scope>
    <source>
        <tissue>Brain</tissue>
    </source>
</reference>
<reference key="6">
    <citation type="journal article" date="2006" name="Nature">
        <title>The DNA sequence and biological annotation of human chromosome 1.</title>
        <authorList>
            <person name="Gregory S.G."/>
            <person name="Barlow K.F."/>
            <person name="McLay K.E."/>
            <person name="Kaul R."/>
            <person name="Swarbreck D."/>
            <person name="Dunham A."/>
            <person name="Scott C.E."/>
            <person name="Howe K.L."/>
            <person name="Woodfine K."/>
            <person name="Spencer C.C.A."/>
            <person name="Jones M.C."/>
            <person name="Gillson C."/>
            <person name="Searle S."/>
            <person name="Zhou Y."/>
            <person name="Kokocinski F."/>
            <person name="McDonald L."/>
            <person name="Evans R."/>
            <person name="Phillips K."/>
            <person name="Atkinson A."/>
            <person name="Cooper R."/>
            <person name="Jones C."/>
            <person name="Hall R.E."/>
            <person name="Andrews T.D."/>
            <person name="Lloyd C."/>
            <person name="Ainscough R."/>
            <person name="Almeida J.P."/>
            <person name="Ambrose K.D."/>
            <person name="Anderson F."/>
            <person name="Andrew R.W."/>
            <person name="Ashwell R.I.S."/>
            <person name="Aubin K."/>
            <person name="Babbage A.K."/>
            <person name="Bagguley C.L."/>
            <person name="Bailey J."/>
            <person name="Beasley H."/>
            <person name="Bethel G."/>
            <person name="Bird C.P."/>
            <person name="Bray-Allen S."/>
            <person name="Brown J.Y."/>
            <person name="Brown A.J."/>
            <person name="Buckley D."/>
            <person name="Burton J."/>
            <person name="Bye J."/>
            <person name="Carder C."/>
            <person name="Chapman J.C."/>
            <person name="Clark S.Y."/>
            <person name="Clarke G."/>
            <person name="Clee C."/>
            <person name="Cobley V."/>
            <person name="Collier R.E."/>
            <person name="Corby N."/>
            <person name="Coville G.J."/>
            <person name="Davies J."/>
            <person name="Deadman R."/>
            <person name="Dunn M."/>
            <person name="Earthrowl M."/>
            <person name="Ellington A.G."/>
            <person name="Errington H."/>
            <person name="Frankish A."/>
            <person name="Frankland J."/>
            <person name="French L."/>
            <person name="Garner P."/>
            <person name="Garnett J."/>
            <person name="Gay L."/>
            <person name="Ghori M.R.J."/>
            <person name="Gibson R."/>
            <person name="Gilby L.M."/>
            <person name="Gillett W."/>
            <person name="Glithero R.J."/>
            <person name="Grafham D.V."/>
            <person name="Griffiths C."/>
            <person name="Griffiths-Jones S."/>
            <person name="Grocock R."/>
            <person name="Hammond S."/>
            <person name="Harrison E.S.I."/>
            <person name="Hart E."/>
            <person name="Haugen E."/>
            <person name="Heath P.D."/>
            <person name="Holmes S."/>
            <person name="Holt K."/>
            <person name="Howden P.J."/>
            <person name="Hunt A.R."/>
            <person name="Hunt S.E."/>
            <person name="Hunter G."/>
            <person name="Isherwood J."/>
            <person name="James R."/>
            <person name="Johnson C."/>
            <person name="Johnson D."/>
            <person name="Joy A."/>
            <person name="Kay M."/>
            <person name="Kershaw J.K."/>
            <person name="Kibukawa M."/>
            <person name="Kimberley A.M."/>
            <person name="King A."/>
            <person name="Knights A.J."/>
            <person name="Lad H."/>
            <person name="Laird G."/>
            <person name="Lawlor S."/>
            <person name="Leongamornlert D.A."/>
            <person name="Lloyd D.M."/>
            <person name="Loveland J."/>
            <person name="Lovell J."/>
            <person name="Lush M.J."/>
            <person name="Lyne R."/>
            <person name="Martin S."/>
            <person name="Mashreghi-Mohammadi M."/>
            <person name="Matthews L."/>
            <person name="Matthews N.S.W."/>
            <person name="McLaren S."/>
            <person name="Milne S."/>
            <person name="Mistry S."/>
            <person name="Moore M.J.F."/>
            <person name="Nickerson T."/>
            <person name="O'Dell C.N."/>
            <person name="Oliver K."/>
            <person name="Palmeiri A."/>
            <person name="Palmer S.A."/>
            <person name="Parker A."/>
            <person name="Patel D."/>
            <person name="Pearce A.V."/>
            <person name="Peck A.I."/>
            <person name="Pelan S."/>
            <person name="Phelps K."/>
            <person name="Phillimore B.J."/>
            <person name="Plumb R."/>
            <person name="Rajan J."/>
            <person name="Raymond C."/>
            <person name="Rouse G."/>
            <person name="Saenphimmachak C."/>
            <person name="Sehra H.K."/>
            <person name="Sheridan E."/>
            <person name="Shownkeen R."/>
            <person name="Sims S."/>
            <person name="Skuce C.D."/>
            <person name="Smith M."/>
            <person name="Steward C."/>
            <person name="Subramanian S."/>
            <person name="Sycamore N."/>
            <person name="Tracey A."/>
            <person name="Tromans A."/>
            <person name="Van Helmond Z."/>
            <person name="Wall M."/>
            <person name="Wallis J.M."/>
            <person name="White S."/>
            <person name="Whitehead S.L."/>
            <person name="Wilkinson J.E."/>
            <person name="Willey D.L."/>
            <person name="Williams H."/>
            <person name="Wilming L."/>
            <person name="Wray P.W."/>
            <person name="Wu Z."/>
            <person name="Coulson A."/>
            <person name="Vaudin M."/>
            <person name="Sulston J.E."/>
            <person name="Durbin R.M."/>
            <person name="Hubbard T."/>
            <person name="Wooster R."/>
            <person name="Dunham I."/>
            <person name="Carter N.P."/>
            <person name="McVean G."/>
            <person name="Ross M.T."/>
            <person name="Harrow J."/>
            <person name="Olson M.V."/>
            <person name="Beck S."/>
            <person name="Rogers J."/>
            <person name="Bentley D.R."/>
        </authorList>
    </citation>
    <scope>NUCLEOTIDE SEQUENCE [LARGE SCALE GENOMIC DNA]</scope>
</reference>
<reference key="7">
    <citation type="submission" date="2005-09" db="EMBL/GenBank/DDBJ databases">
        <authorList>
            <person name="Mural R.J."/>
            <person name="Istrail S."/>
            <person name="Sutton G.G."/>
            <person name="Florea L."/>
            <person name="Halpern A.L."/>
            <person name="Mobarry C.M."/>
            <person name="Lippert R."/>
            <person name="Walenz B."/>
            <person name="Shatkay H."/>
            <person name="Dew I."/>
            <person name="Miller J.R."/>
            <person name="Flanigan M.J."/>
            <person name="Edwards N.J."/>
            <person name="Bolanos R."/>
            <person name="Fasulo D."/>
            <person name="Halldorsson B.V."/>
            <person name="Hannenhalli S."/>
            <person name="Turner R."/>
            <person name="Yooseph S."/>
            <person name="Lu F."/>
            <person name="Nusskern D.R."/>
            <person name="Shue B.C."/>
            <person name="Zheng X.H."/>
            <person name="Zhong F."/>
            <person name="Delcher A.L."/>
            <person name="Huson D.H."/>
            <person name="Kravitz S.A."/>
            <person name="Mouchard L."/>
            <person name="Reinert K."/>
            <person name="Remington K.A."/>
            <person name="Clark A.G."/>
            <person name="Waterman M.S."/>
            <person name="Eichler E.E."/>
            <person name="Adams M.D."/>
            <person name="Hunkapiller M.W."/>
            <person name="Myers E.W."/>
            <person name="Venter J.C."/>
        </authorList>
    </citation>
    <scope>NUCLEOTIDE SEQUENCE [LARGE SCALE GENOMIC DNA]</scope>
</reference>
<reference key="8">
    <citation type="journal article" date="2004" name="Genome Res.">
        <title>The status, quality, and expansion of the NIH full-length cDNA project: the Mammalian Gene Collection (MGC).</title>
        <authorList>
            <consortium name="The MGC Project Team"/>
        </authorList>
    </citation>
    <scope>NUCLEOTIDE SEQUENCE [LARGE SCALE MRNA]</scope>
</reference>
<reference key="9">
    <citation type="journal article" date="2001" name="Bioessays">
        <title>Hypocretin/orexin, sleep and narcolepsy.</title>
        <authorList>
            <person name="Hungs M."/>
            <person name="Mignot E."/>
        </authorList>
    </citation>
    <scope>REVIEW</scope>
</reference>
<reference key="10">
    <citation type="journal article" date="2001" name="Annu. Rev. Neurosci.">
        <title>To eat or to sleep? Orexin in the regulation of feeding and wakefulness.</title>
        <authorList>
            <person name="Willie J.T."/>
            <person name="Chemelli R.M."/>
            <person name="Sinton C.M."/>
            <person name="Yanagisawa M."/>
        </authorList>
    </citation>
    <scope>REVIEW</scope>
</reference>
<reference evidence="12 13" key="11">
    <citation type="journal article" date="2016" name="Nat. Struct. Mol. Biol.">
        <title>Structure and ligand-binding mechanism of the human OX1 and OX2 orexin receptors.</title>
        <authorList>
            <person name="Yin J."/>
            <person name="Babaoglu K."/>
            <person name="Brautigam C.A."/>
            <person name="Clark L."/>
            <person name="Shao Z."/>
            <person name="Scheuermann T.H."/>
            <person name="Harrell C.M."/>
            <person name="Gotter A.L."/>
            <person name="Roecker A.J."/>
            <person name="Winrow C.J."/>
            <person name="Renger J.J."/>
            <person name="Coleman P.J."/>
            <person name="Rosenbaum D.M."/>
        </authorList>
    </citation>
    <scope>X-RAY CRYSTALLOGRAPHY (2.75 ANGSTROMS) OF 1-246 AND 288-380 IN COMPLEXES WITH THE ANTAGONISTS SUVOREXANT AND SB-674042</scope>
    <scope>DISULFIDE BONDS</scope>
    <scope>FUNCTION</scope>
    <scope>SUBCELLULAR LOCATION</scope>
    <scope>TOPOLOGY</scope>
    <scope>MUTAGENESIS OF 26-ASP--TYR-41; TRP-36 AND ASN-318</scope>
    <scope>DOMAIN</scope>
</reference>
<comment type="function">
    <text evidence="6 7">Moderately selective excitatory receptor for orexin-A and, with a lower affinity, for orexin-B neuropeptide (PubMed:26950369, PubMed:9491897). Triggers an increase in cytoplasmic Ca(2+) levels in response to orexin-A binding (PubMed:26950369, PubMed:9491897).</text>
</comment>
<comment type="interaction">
    <interactant intactId="EBI-21914411">
        <id>O43613</id>
    </interactant>
    <interactant intactId="EBI-2875891">
        <id>P35414</id>
        <label>APLNR</label>
    </interactant>
    <organismsDiffer>false</organismsDiffer>
    <experiments>6</experiments>
</comment>
<comment type="subcellular location">
    <subcellularLocation>
        <location evidence="6 7">Cell membrane</location>
        <topology evidence="6">Multi-pass membrane protein</topology>
    </subcellularLocation>
</comment>
<comment type="domain">
    <text evidence="6">The N-terminal region is required for orexin signaling.</text>
</comment>
<comment type="miscellaneous">
    <text evidence="6">The antagonists suvorexant and SB-674042 bind at the cognate neuropeptide binding site that is situated between the transmembrane helices and accessible from the extracellular side of the membrane.</text>
</comment>
<comment type="similarity">
    <text evidence="2">Belongs to the G-protein coupled receptor 1 family.</text>
</comment>
<accession>O43613</accession>
<accession>A8K3A6</accession>
<accession>Q9HBV6</accession>
<protein>
    <recommendedName>
        <fullName evidence="9">Orexin/Hypocretin receptor type 1</fullName>
    </recommendedName>
    <alternativeName>
        <fullName evidence="11">Hypocretin receptor type 1</fullName>
    </alternativeName>
    <alternativeName>
        <fullName evidence="10">Orexin receptor type 1</fullName>
        <shortName>Ox-1-R</shortName>
        <shortName>Ox1-R</shortName>
        <shortName>Ox1R</shortName>
    </alternativeName>
</protein>
<feature type="chain" id="PRO_0000069984" description="Orexin/Hypocretin receptor type 1">
    <location>
        <begin position="1"/>
        <end position="425"/>
    </location>
</feature>
<feature type="topological domain" description="Extracellular" evidence="6">
    <location>
        <begin position="1"/>
        <end position="46"/>
    </location>
</feature>
<feature type="transmembrane region" description="Helical; Name=1" evidence="6">
    <location>
        <begin position="47"/>
        <end position="67"/>
    </location>
</feature>
<feature type="topological domain" description="Cytoplasmic" evidence="6">
    <location>
        <begin position="68"/>
        <end position="82"/>
    </location>
</feature>
<feature type="transmembrane region" description="Helical; Name=2" evidence="6">
    <location>
        <begin position="83"/>
        <end position="105"/>
    </location>
</feature>
<feature type="topological domain" description="Extracellular" evidence="6">
    <location>
        <begin position="106"/>
        <end position="119"/>
    </location>
</feature>
<feature type="transmembrane region" description="Helical; Name=3" evidence="6">
    <location>
        <begin position="120"/>
        <end position="140"/>
    </location>
</feature>
<feature type="topological domain" description="Cytoplasmic" evidence="6">
    <location>
        <begin position="141"/>
        <end position="160"/>
    </location>
</feature>
<feature type="transmembrane region" description="Helical; Name=4" evidence="6">
    <location>
        <begin position="161"/>
        <end position="182"/>
    </location>
</feature>
<feature type="topological domain" description="Extracellular" evidence="6">
    <location>
        <begin position="183"/>
        <end position="213"/>
    </location>
</feature>
<feature type="transmembrane region" description="Helical; Name=5" evidence="6">
    <location>
        <begin position="214"/>
        <end position="235"/>
    </location>
</feature>
<feature type="topological domain" description="Cytoplasmic" evidence="6">
    <location>
        <begin position="236"/>
        <end position="298"/>
    </location>
</feature>
<feature type="transmembrane region" description="Helical; Name=6" evidence="6">
    <location>
        <begin position="299"/>
        <end position="321"/>
    </location>
</feature>
<feature type="topological domain" description="Extracellular" evidence="6">
    <location>
        <begin position="322"/>
        <end position="336"/>
    </location>
</feature>
<feature type="transmembrane region" description="Helical; Name=7" evidence="6">
    <location>
        <begin position="337"/>
        <end position="360"/>
    </location>
</feature>
<feature type="topological domain" description="Cytoplasmic" evidence="6">
    <location>
        <begin position="361"/>
        <end position="425"/>
    </location>
</feature>
<feature type="region of interest" description="Disordered" evidence="3">
    <location>
        <begin position="1"/>
        <end position="24"/>
    </location>
</feature>
<feature type="region of interest" description="Required for response to orexin-A" evidence="6">
    <location>
        <begin position="26"/>
        <end position="41"/>
    </location>
</feature>
<feature type="binding site" evidence="6 12">
    <location>
        <position position="318"/>
    </location>
    <ligand>
        <name>suvorexant</name>
        <dbReference type="ChEBI" id="CHEBI:82698"/>
        <note>antagonist</note>
    </ligand>
</feature>
<feature type="site" description="Important for responses to orexin" evidence="6">
    <location>
        <position position="36"/>
    </location>
</feature>
<feature type="glycosylation site" description="N-linked (GlcNAc...) asparagine" evidence="1">
    <location>
        <position position="194"/>
    </location>
</feature>
<feature type="disulfide bond" evidence="12 13">
    <location>
        <begin position="119"/>
        <end position="202"/>
    </location>
</feature>
<feature type="sequence variant" id="VAR_044505" description="In dbSNP:rs144603792." evidence="4">
    <original>G</original>
    <variation>S</variation>
    <location>
        <position position="167"/>
    </location>
</feature>
<feature type="sequence variant" id="VAR_033480" description="In dbSNP:rs7516785." evidence="4">
    <original>R</original>
    <variation>Q</variation>
    <location>
        <position position="279"/>
    </location>
</feature>
<feature type="sequence variant" id="VAR_044506" description="In dbSNP:rs41439244." evidence="4">
    <original>R</original>
    <variation>H</variation>
    <location>
        <position position="281"/>
    </location>
</feature>
<feature type="sequence variant" id="VAR_022063" description="In dbSNP:rs2271933." evidence="4 5">
    <original>I</original>
    <variation>V</variation>
    <location>
        <position position="408"/>
    </location>
</feature>
<feature type="mutagenesis site" description="Abolishes response to orexin-A." evidence="6">
    <location>
        <begin position="26"/>
        <end position="41"/>
    </location>
</feature>
<feature type="mutagenesis site" description="Strongly impairs response to orexin-A." evidence="6">
    <original>W</original>
    <variation>A</variation>
    <location>
        <position position="36"/>
    </location>
</feature>
<feature type="mutagenesis site" description="Strongly impairs response to orexin-A." evidence="6">
    <original>N</original>
    <variation>A</variation>
    <location>
        <position position="318"/>
    </location>
</feature>
<feature type="sequence conflict" description="In Ref. 1; AAC39601." evidence="8" ref="1">
    <original>A</original>
    <variation>G</variation>
    <location>
        <position position="280"/>
    </location>
</feature>
<feature type="helix" evidence="15">
    <location>
        <begin position="30"/>
        <end position="38"/>
    </location>
</feature>
<feature type="helix" evidence="15">
    <location>
        <begin position="40"/>
        <end position="43"/>
    </location>
</feature>
<feature type="helix" evidence="15">
    <location>
        <begin position="46"/>
        <end position="73"/>
    </location>
</feature>
<feature type="helix" evidence="15">
    <location>
        <begin position="75"/>
        <end position="77"/>
    </location>
</feature>
<feature type="helix" evidence="15">
    <location>
        <begin position="80"/>
        <end position="109"/>
    </location>
</feature>
<feature type="strand" evidence="16">
    <location>
        <begin position="110"/>
        <end position="112"/>
    </location>
</feature>
<feature type="helix" evidence="15">
    <location>
        <begin position="115"/>
        <end position="149"/>
    </location>
</feature>
<feature type="helix" evidence="14">
    <location>
        <begin position="151"/>
        <end position="153"/>
    </location>
</feature>
<feature type="helix" evidence="15">
    <location>
        <begin position="158"/>
        <end position="175"/>
    </location>
</feature>
<feature type="helix" evidence="15">
    <location>
        <begin position="177"/>
        <end position="182"/>
    </location>
</feature>
<feature type="strand" evidence="15">
    <location>
        <begin position="183"/>
        <end position="189"/>
    </location>
</feature>
<feature type="helix" evidence="15">
    <location>
        <begin position="190"/>
        <end position="192"/>
    </location>
</feature>
<feature type="turn" evidence="15">
    <location>
        <begin position="193"/>
        <end position="195"/>
    </location>
</feature>
<feature type="strand" evidence="15">
    <location>
        <begin position="200"/>
        <end position="204"/>
    </location>
</feature>
<feature type="strand" evidence="15">
    <location>
        <begin position="207"/>
        <end position="210"/>
    </location>
</feature>
<feature type="helix" evidence="15">
    <location>
        <begin position="211"/>
        <end position="223"/>
    </location>
</feature>
<feature type="helix" evidence="15">
    <location>
        <begin position="225"/>
        <end position="242"/>
    </location>
</feature>
<feature type="helix" evidence="15">
    <location>
        <begin position="287"/>
        <end position="322"/>
    </location>
</feature>
<feature type="helix" evidence="15">
    <location>
        <begin position="330"/>
        <end position="332"/>
    </location>
</feature>
<feature type="helix" evidence="15">
    <location>
        <begin position="333"/>
        <end position="361"/>
    </location>
</feature>
<feature type="helix" evidence="15">
    <location>
        <begin position="363"/>
        <end position="374"/>
    </location>
</feature>
<sequence>MEPSATPGAQMGVPPGSREPSPVPPDYEDEFLRYLWRDYLYPKQYEWVLIAAYVAVFVVALVGNTLVCLAVWRNHHMRTVTNYFIVNLSLADVLVTAICLPASLLVDITESWLFGHALCKVIPYLQAVSVSVAVLTLSFIALDRWYAICHPLLFKSTARRARGSILGIWAVSLAIMVPQAAVMECSSVLPELANRTRLFSVCDERWADDLYPKIYHSCFFIVTYLAPLGLMAMAYFQIFRKLWGRQIPGTTSALVRNWKRPSDQLGDLEQGLSGEPQPRARAFLAEVKQMRARRKTAKMLMVVLLVFALCYLPISVLNVLKRVFGMFRQASDREAVYACFTFSHWLVYANSAANPIIYNFLSGKFREQFKAAFSCCLPGLGPCGSLKAPSPRSSASHKSLSLQSRCSISKISEHVVLTSVTTVLP</sequence>
<name>OX1R_HUMAN</name>
<gene>
    <name evidence="11" type="primary">HCRTR1</name>
</gene>
<proteinExistence type="evidence at protein level"/>